<reference key="1">
    <citation type="journal article" date="2008" name="BMC Genomics">
        <title>Genomics of an extreme psychrophile, Psychromonas ingrahamii.</title>
        <authorList>
            <person name="Riley M."/>
            <person name="Staley J.T."/>
            <person name="Danchin A."/>
            <person name="Wang T.Z."/>
            <person name="Brettin T.S."/>
            <person name="Hauser L.J."/>
            <person name="Land M.L."/>
            <person name="Thompson L.S."/>
        </authorList>
    </citation>
    <scope>NUCLEOTIDE SEQUENCE [LARGE SCALE GENOMIC DNA]</scope>
    <source>
        <strain>DSM 17664 / CCUG 51855 / 37</strain>
    </source>
</reference>
<evidence type="ECO:0000255" key="1"/>
<evidence type="ECO:0000255" key="2">
    <source>
        <dbReference type="HAMAP-Rule" id="MF_01036"/>
    </source>
</evidence>
<comment type="function">
    <text evidence="2">Involved in mRNA degradation. Hydrolyzes single-stranded polyribonucleotides processively in the 3' to 5' direction.</text>
</comment>
<comment type="catalytic activity">
    <reaction evidence="2">
        <text>Exonucleolytic cleavage in the 3'- to 5'-direction to yield nucleoside 5'-phosphates.</text>
        <dbReference type="EC" id="3.1.13.1"/>
    </reaction>
</comment>
<comment type="subcellular location">
    <subcellularLocation>
        <location evidence="2">Cytoplasm</location>
    </subcellularLocation>
</comment>
<comment type="similarity">
    <text evidence="2">Belongs to the RNR ribonuclease family. RNase II subfamily.</text>
</comment>
<protein>
    <recommendedName>
        <fullName evidence="2">Exoribonuclease 2</fullName>
        <ecNumber evidence="2">3.1.13.1</ecNumber>
    </recommendedName>
    <alternativeName>
        <fullName evidence="2">Exoribonuclease II</fullName>
        <shortName evidence="2">RNase II</shortName>
        <shortName evidence="2">Ribonuclease II</shortName>
    </alternativeName>
</protein>
<organism>
    <name type="scientific">Psychromonas ingrahamii (strain DSM 17664 / CCUG 51855 / 37)</name>
    <dbReference type="NCBI Taxonomy" id="357804"/>
    <lineage>
        <taxon>Bacteria</taxon>
        <taxon>Pseudomonadati</taxon>
        <taxon>Pseudomonadota</taxon>
        <taxon>Gammaproteobacteria</taxon>
        <taxon>Alteromonadales</taxon>
        <taxon>Psychromonadaceae</taxon>
        <taxon>Psychromonas</taxon>
    </lineage>
</organism>
<accession>A1SWZ6</accession>
<name>RNB_PSYIN</name>
<keyword id="KW-0963">Cytoplasm</keyword>
<keyword id="KW-0269">Exonuclease</keyword>
<keyword id="KW-0378">Hydrolase</keyword>
<keyword id="KW-0540">Nuclease</keyword>
<keyword id="KW-1185">Reference proteome</keyword>
<keyword id="KW-0694">RNA-binding</keyword>
<feature type="chain" id="PRO_0000409536" description="Exoribonuclease 2">
    <location>
        <begin position="1"/>
        <end position="656"/>
    </location>
</feature>
<feature type="domain" description="RNB" evidence="1">
    <location>
        <begin position="190"/>
        <end position="518"/>
    </location>
</feature>
<feature type="domain" description="S1 motif" evidence="2">
    <location>
        <begin position="564"/>
        <end position="649"/>
    </location>
</feature>
<gene>
    <name evidence="2" type="primary">rnb</name>
    <name type="ordered locus">Ping_2270</name>
</gene>
<dbReference type="EC" id="3.1.13.1" evidence="2"/>
<dbReference type="EMBL" id="CP000510">
    <property type="protein sequence ID" value="ABM04011.1"/>
    <property type="molecule type" value="Genomic_DNA"/>
</dbReference>
<dbReference type="RefSeq" id="WP_011770571.1">
    <property type="nucleotide sequence ID" value="NC_008709.1"/>
</dbReference>
<dbReference type="SMR" id="A1SWZ6"/>
<dbReference type="STRING" id="357804.Ping_2270"/>
<dbReference type="KEGG" id="pin:Ping_2270"/>
<dbReference type="eggNOG" id="COG4776">
    <property type="taxonomic scope" value="Bacteria"/>
</dbReference>
<dbReference type="HOGENOM" id="CLU_002333_7_3_6"/>
<dbReference type="OrthoDB" id="9764149at2"/>
<dbReference type="Proteomes" id="UP000000639">
    <property type="component" value="Chromosome"/>
</dbReference>
<dbReference type="GO" id="GO:0005829">
    <property type="term" value="C:cytosol"/>
    <property type="evidence" value="ECO:0007669"/>
    <property type="project" value="UniProtKB-ARBA"/>
</dbReference>
<dbReference type="GO" id="GO:0008859">
    <property type="term" value="F:exoribonuclease II activity"/>
    <property type="evidence" value="ECO:0007669"/>
    <property type="project" value="UniProtKB-UniRule"/>
</dbReference>
<dbReference type="GO" id="GO:0003723">
    <property type="term" value="F:RNA binding"/>
    <property type="evidence" value="ECO:0007669"/>
    <property type="project" value="UniProtKB-KW"/>
</dbReference>
<dbReference type="GO" id="GO:0006402">
    <property type="term" value="P:mRNA catabolic process"/>
    <property type="evidence" value="ECO:0007669"/>
    <property type="project" value="UniProtKB-UniRule"/>
</dbReference>
<dbReference type="Gene3D" id="2.40.50.640">
    <property type="match status" value="1"/>
</dbReference>
<dbReference type="Gene3D" id="2.40.50.140">
    <property type="entry name" value="Nucleic acid-binding proteins"/>
    <property type="match status" value="2"/>
</dbReference>
<dbReference type="HAMAP" id="MF_01036">
    <property type="entry name" value="RNase_II"/>
    <property type="match status" value="1"/>
</dbReference>
<dbReference type="InterPro" id="IPR011129">
    <property type="entry name" value="CSD"/>
</dbReference>
<dbReference type="InterPro" id="IPR012340">
    <property type="entry name" value="NA-bd_OB-fold"/>
</dbReference>
<dbReference type="InterPro" id="IPR013223">
    <property type="entry name" value="RNase_B_OB_dom"/>
</dbReference>
<dbReference type="InterPro" id="IPR011804">
    <property type="entry name" value="RNase_II"/>
</dbReference>
<dbReference type="InterPro" id="IPR001900">
    <property type="entry name" value="RNase_II/R"/>
</dbReference>
<dbReference type="InterPro" id="IPR022966">
    <property type="entry name" value="RNase_II/R_CS"/>
</dbReference>
<dbReference type="InterPro" id="IPR004476">
    <property type="entry name" value="RNase_II/RNase_R"/>
</dbReference>
<dbReference type="InterPro" id="IPR050180">
    <property type="entry name" value="RNR_Ribonuclease"/>
</dbReference>
<dbReference type="NCBIfam" id="TIGR00358">
    <property type="entry name" value="3_prime_RNase"/>
    <property type="match status" value="1"/>
</dbReference>
<dbReference type="NCBIfam" id="NF003455">
    <property type="entry name" value="PRK05054.1"/>
    <property type="match status" value="1"/>
</dbReference>
<dbReference type="NCBIfam" id="TIGR02062">
    <property type="entry name" value="RNase_B"/>
    <property type="match status" value="1"/>
</dbReference>
<dbReference type="PANTHER" id="PTHR23355:SF37">
    <property type="entry name" value="EXORIBONUCLEASE 2"/>
    <property type="match status" value="1"/>
</dbReference>
<dbReference type="PANTHER" id="PTHR23355">
    <property type="entry name" value="RIBONUCLEASE"/>
    <property type="match status" value="1"/>
</dbReference>
<dbReference type="Pfam" id="PF08206">
    <property type="entry name" value="OB_RNB"/>
    <property type="match status" value="1"/>
</dbReference>
<dbReference type="Pfam" id="PF00773">
    <property type="entry name" value="RNB"/>
    <property type="match status" value="1"/>
</dbReference>
<dbReference type="SMART" id="SM00357">
    <property type="entry name" value="CSP"/>
    <property type="match status" value="1"/>
</dbReference>
<dbReference type="SMART" id="SM00955">
    <property type="entry name" value="RNB"/>
    <property type="match status" value="1"/>
</dbReference>
<dbReference type="SUPFAM" id="SSF50249">
    <property type="entry name" value="Nucleic acid-binding proteins"/>
    <property type="match status" value="4"/>
</dbReference>
<dbReference type="PROSITE" id="PS01175">
    <property type="entry name" value="RIBONUCLEASE_II"/>
    <property type="match status" value="1"/>
</dbReference>
<proteinExistence type="inferred from homology"/>
<sequence>MFQNNPLLSQLKKQIQEDIPKRQGKVKATDRGYGFLETDKGKRFFIPPSEMKKVLHGDQINAFIRGKGDKSTAEPNQLKKTGSAVFIARLVIKQKNISIIPKNPLLKGFFKIKGSQSLQSRGYQDGDWVKVELVSHALEGNGFLTQIIEKIADASDPFAYRLLTVATHNLANKAPEFDHPWKIIDPQLSRSDLTKTPFFTIDGVNTQDMDDALYIEADENGWKLTVAISDPSAYVPENSDMDAEAKRRAFTLYLPNFNVPMLPRDLSDSLCSLKEGEKRATLCCTIHINKKGEIEGEPAFYGAWIKSHYRLNYTDVSNYLENEELSNDCWKPSTQLAEQLRTLDSLSLKRLQWRTDNNAVFKNQPDYTLKLNNKGEISEILCEPRRSANRLVEESMIAANICAGDFLAKHKQQGVFNTHSGFSSERLGKVVSLLSEFGIESDIQTLATVTGYTKIRQQTNLLHNSYLDHRLRKLLSYADIKNTPEAHFTLGVDHYATWTSPIRKYGDLLNHRLIKSVLLKEDNIQIDNEIGQVLNAARKLQRLAERDVNNILYSQYLKNQVESKWRYKAEIFDIIKAGIRVKIQENGATFFIPCSLLCKDSSDATKIDCNQALGKVIIAQQTELQLGDVIDVMLNNVKVESGQLIGKLAESLTISE</sequence>